<keyword id="KW-0963">Cytoplasm</keyword>
<keyword id="KW-0456">Lyase</keyword>
<keyword id="KW-0479">Metal-binding</keyword>
<keyword id="KW-0684">Rhamnose metabolism</keyword>
<keyword id="KW-0862">Zinc</keyword>
<name>RHAD_SALG2</name>
<gene>
    <name evidence="1" type="primary">rhaD</name>
    <name type="ordered locus">SG3376</name>
</gene>
<sequence length="275" mass="30187">MQNITDSWFVQGMIKATSDAWLKGWDERNGGNLTLRLDEADIAPFATNFHEKPRYIALSQPMPLLANTPFIVTGSGKFFRNVQLDPAANLGVVKIDSDGAGYHILWGLTHDAVPTSELPAHFLSHCERIKATHGKDRVIMHCHATNLIALTYVLENNTALITRKLWEGSTECLVVFPDGVGILPWMVPGTDEIGQATAQEMQKHSLVLWPFHGVFGSGPTLDETFGLIDTAEKSAEVLVKIYSMGGMKQTITREELVALGKRFGVTPLASAVALY</sequence>
<accession>B5RFC6</accession>
<dbReference type="EC" id="4.1.2.19" evidence="1"/>
<dbReference type="EMBL" id="AM933173">
    <property type="protein sequence ID" value="CAR39169.1"/>
    <property type="molecule type" value="Genomic_DNA"/>
</dbReference>
<dbReference type="RefSeq" id="WP_001179690.1">
    <property type="nucleotide sequence ID" value="NC_011274.1"/>
</dbReference>
<dbReference type="SMR" id="B5RFC6"/>
<dbReference type="KEGG" id="seg:SG3376"/>
<dbReference type="HOGENOM" id="CLU_076831_0_0_6"/>
<dbReference type="UniPathway" id="UPA00541">
    <property type="reaction ID" value="UER00603"/>
</dbReference>
<dbReference type="Proteomes" id="UP000008321">
    <property type="component" value="Chromosome"/>
</dbReference>
<dbReference type="GO" id="GO:0005829">
    <property type="term" value="C:cytosol"/>
    <property type="evidence" value="ECO:0007669"/>
    <property type="project" value="TreeGrafter"/>
</dbReference>
<dbReference type="GO" id="GO:0046872">
    <property type="term" value="F:metal ion binding"/>
    <property type="evidence" value="ECO:0007669"/>
    <property type="project" value="UniProtKB-KW"/>
</dbReference>
<dbReference type="GO" id="GO:0008994">
    <property type="term" value="F:rhamnulose-1-phosphate aldolase activity"/>
    <property type="evidence" value="ECO:0007669"/>
    <property type="project" value="UniProtKB-UniRule"/>
</dbReference>
<dbReference type="GO" id="GO:0019323">
    <property type="term" value="P:pentose catabolic process"/>
    <property type="evidence" value="ECO:0007669"/>
    <property type="project" value="TreeGrafter"/>
</dbReference>
<dbReference type="GO" id="GO:0019301">
    <property type="term" value="P:rhamnose catabolic process"/>
    <property type="evidence" value="ECO:0007669"/>
    <property type="project" value="UniProtKB-UniRule"/>
</dbReference>
<dbReference type="CDD" id="cd00398">
    <property type="entry name" value="Aldolase_II"/>
    <property type="match status" value="1"/>
</dbReference>
<dbReference type="FunFam" id="3.40.225.10:FF:000006">
    <property type="entry name" value="Rhamnulose-1-phosphate aldolase"/>
    <property type="match status" value="1"/>
</dbReference>
<dbReference type="Gene3D" id="3.40.225.10">
    <property type="entry name" value="Class II aldolase/adducin N-terminal domain"/>
    <property type="match status" value="1"/>
</dbReference>
<dbReference type="HAMAP" id="MF_00770">
    <property type="entry name" value="RhaD"/>
    <property type="match status" value="1"/>
</dbReference>
<dbReference type="InterPro" id="IPR050197">
    <property type="entry name" value="Aldolase_class_II_sugar_metab"/>
</dbReference>
<dbReference type="InterPro" id="IPR001303">
    <property type="entry name" value="Aldolase_II/adducin_N"/>
</dbReference>
<dbReference type="InterPro" id="IPR036409">
    <property type="entry name" value="Aldolase_II/adducin_N_sf"/>
</dbReference>
<dbReference type="InterPro" id="IPR013447">
    <property type="entry name" value="Rhamnulose-1-P_Aldolase"/>
</dbReference>
<dbReference type="NCBIfam" id="NF002963">
    <property type="entry name" value="PRK03634.1"/>
    <property type="match status" value="1"/>
</dbReference>
<dbReference type="NCBIfam" id="TIGR02624">
    <property type="entry name" value="rhamnu_1P_ald"/>
    <property type="match status" value="1"/>
</dbReference>
<dbReference type="PANTHER" id="PTHR22789">
    <property type="entry name" value="FUCULOSE PHOSPHATE ALDOLASE"/>
    <property type="match status" value="1"/>
</dbReference>
<dbReference type="PANTHER" id="PTHR22789:SF16">
    <property type="entry name" value="RHAMNULOSE-1-PHOSPHATE ALDOLASE"/>
    <property type="match status" value="1"/>
</dbReference>
<dbReference type="Pfam" id="PF00596">
    <property type="entry name" value="Aldolase_II"/>
    <property type="match status" value="1"/>
</dbReference>
<dbReference type="SMART" id="SM01007">
    <property type="entry name" value="Aldolase_II"/>
    <property type="match status" value="1"/>
</dbReference>
<dbReference type="SUPFAM" id="SSF53639">
    <property type="entry name" value="AraD/HMP-PK domain-like"/>
    <property type="match status" value="1"/>
</dbReference>
<feature type="chain" id="PRO_1000193734" description="Rhamnulose-1-phosphate aldolase">
    <location>
        <begin position="1"/>
        <end position="275"/>
    </location>
</feature>
<feature type="active site" evidence="1">
    <location>
        <position position="117"/>
    </location>
</feature>
<feature type="binding site" evidence="1">
    <location>
        <position position="141"/>
    </location>
    <ligand>
        <name>Zn(2+)</name>
        <dbReference type="ChEBI" id="CHEBI:29105"/>
    </ligand>
</feature>
<feature type="binding site" evidence="1">
    <location>
        <position position="143"/>
    </location>
    <ligand>
        <name>Zn(2+)</name>
        <dbReference type="ChEBI" id="CHEBI:29105"/>
    </ligand>
</feature>
<feature type="binding site" evidence="1">
    <location>
        <position position="212"/>
    </location>
    <ligand>
        <name>Zn(2+)</name>
        <dbReference type="ChEBI" id="CHEBI:29105"/>
    </ligand>
</feature>
<organism>
    <name type="scientific">Salmonella gallinarum (strain 287/91 / NCTC 13346)</name>
    <dbReference type="NCBI Taxonomy" id="550538"/>
    <lineage>
        <taxon>Bacteria</taxon>
        <taxon>Pseudomonadati</taxon>
        <taxon>Pseudomonadota</taxon>
        <taxon>Gammaproteobacteria</taxon>
        <taxon>Enterobacterales</taxon>
        <taxon>Enterobacteriaceae</taxon>
        <taxon>Salmonella</taxon>
    </lineage>
</organism>
<protein>
    <recommendedName>
        <fullName evidence="1">Rhamnulose-1-phosphate aldolase</fullName>
        <ecNumber evidence="1">4.1.2.19</ecNumber>
    </recommendedName>
</protein>
<reference key="1">
    <citation type="journal article" date="2008" name="Genome Res.">
        <title>Comparative genome analysis of Salmonella enteritidis PT4 and Salmonella gallinarum 287/91 provides insights into evolutionary and host adaptation pathways.</title>
        <authorList>
            <person name="Thomson N.R."/>
            <person name="Clayton D.J."/>
            <person name="Windhorst D."/>
            <person name="Vernikos G."/>
            <person name="Davidson S."/>
            <person name="Churcher C."/>
            <person name="Quail M.A."/>
            <person name="Stevens M."/>
            <person name="Jones M.A."/>
            <person name="Watson M."/>
            <person name="Barron A."/>
            <person name="Layton A."/>
            <person name="Pickard D."/>
            <person name="Kingsley R.A."/>
            <person name="Bignell A."/>
            <person name="Clark L."/>
            <person name="Harris B."/>
            <person name="Ormond D."/>
            <person name="Abdellah Z."/>
            <person name="Brooks K."/>
            <person name="Cherevach I."/>
            <person name="Chillingworth T."/>
            <person name="Woodward J."/>
            <person name="Norberczak H."/>
            <person name="Lord A."/>
            <person name="Arrowsmith C."/>
            <person name="Jagels K."/>
            <person name="Moule S."/>
            <person name="Mungall K."/>
            <person name="Saunders M."/>
            <person name="Whitehead S."/>
            <person name="Chabalgoity J.A."/>
            <person name="Maskell D."/>
            <person name="Humphreys T."/>
            <person name="Roberts M."/>
            <person name="Barrow P.A."/>
            <person name="Dougan G."/>
            <person name="Parkhill J."/>
        </authorList>
    </citation>
    <scope>NUCLEOTIDE SEQUENCE [LARGE SCALE GENOMIC DNA]</scope>
    <source>
        <strain>287/91 / NCTC 13346</strain>
    </source>
</reference>
<comment type="function">
    <text evidence="1">Catalyzes the reversible cleavage of L-rhamnulose-1-phosphate to dihydroxyacetone phosphate (DHAP) and L-lactaldehyde.</text>
</comment>
<comment type="catalytic activity">
    <reaction evidence="1">
        <text>L-rhamnulose 1-phosphate = (S)-lactaldehyde + dihydroxyacetone phosphate</text>
        <dbReference type="Rhea" id="RHEA:19689"/>
        <dbReference type="ChEBI" id="CHEBI:18041"/>
        <dbReference type="ChEBI" id="CHEBI:57642"/>
        <dbReference type="ChEBI" id="CHEBI:58313"/>
        <dbReference type="EC" id="4.1.2.19"/>
    </reaction>
</comment>
<comment type="cofactor">
    <cofactor evidence="1">
        <name>Zn(2+)</name>
        <dbReference type="ChEBI" id="CHEBI:29105"/>
    </cofactor>
    <text evidence="1">Binds 1 zinc ion per subunit.</text>
</comment>
<comment type="pathway">
    <text evidence="1">Carbohydrate degradation; L-rhamnose degradation; glycerone phosphate from L-rhamnose: step 3/3.</text>
</comment>
<comment type="subunit">
    <text evidence="1">Homotetramer.</text>
</comment>
<comment type="subcellular location">
    <subcellularLocation>
        <location evidence="1">Cytoplasm</location>
    </subcellularLocation>
</comment>
<comment type="similarity">
    <text evidence="1">Belongs to the aldolase class II family. RhaD subfamily.</text>
</comment>
<evidence type="ECO:0000255" key="1">
    <source>
        <dbReference type="HAMAP-Rule" id="MF_00770"/>
    </source>
</evidence>
<proteinExistence type="inferred from homology"/>